<evidence type="ECO:0000250" key="1"/>
<evidence type="ECO:0000305" key="2"/>
<feature type="chain" id="PRO_0000429594" description="Succinyl-CoA--L-malate CoA-transferase beta subunit">
    <location>
        <begin position="1"/>
        <end position="405"/>
    </location>
</feature>
<feature type="active site" description="Nucleophile" evidence="1">
    <location>
        <position position="175"/>
    </location>
</feature>
<proteinExistence type="inferred from homology"/>
<comment type="function">
    <text evidence="1">Involved in the 3-hydroxypropionate cycle used for autotrophic carbon dioxide fixation. Catalyzes the transfer of CoA moiety from succinyl-CoA to L-malate to yield L-malyl-CoA (By similarity).</text>
</comment>
<comment type="catalytic activity">
    <reaction>
        <text>succinyl-CoA + (S)-malate = (S)-malyl-CoA + succinate</text>
        <dbReference type="Rhea" id="RHEA:38255"/>
        <dbReference type="ChEBI" id="CHEBI:15589"/>
        <dbReference type="ChEBI" id="CHEBI:30031"/>
        <dbReference type="ChEBI" id="CHEBI:57292"/>
        <dbReference type="ChEBI" id="CHEBI:57317"/>
        <dbReference type="EC" id="2.8.3.22"/>
    </reaction>
</comment>
<comment type="catalytic activity">
    <reaction>
        <text>(3S)-citramalate + succinyl-CoA = (3S)-citramalyl-CoA + succinate</text>
        <dbReference type="Rhea" id="RHEA:38287"/>
        <dbReference type="ChEBI" id="CHEBI:30031"/>
        <dbReference type="ChEBI" id="CHEBI:30936"/>
        <dbReference type="ChEBI" id="CHEBI:57292"/>
        <dbReference type="ChEBI" id="CHEBI:58668"/>
        <dbReference type="EC" id="2.8.3.22"/>
    </reaction>
</comment>
<comment type="subunit">
    <text evidence="1">Forms a large complex composed of six heterodimers (alpha, beta).</text>
</comment>
<comment type="induction">
    <text evidence="2">Under autotrophic growth conditions.</text>
</comment>
<comment type="similarity">
    <text evidence="2">Belongs to the CoA-transferase III family.</text>
</comment>
<keyword id="KW-0120">Carbon dioxide fixation</keyword>
<keyword id="KW-1185">Reference proteome</keyword>
<keyword id="KW-0808">Transferase</keyword>
<organism>
    <name type="scientific">Chloroflexus aurantiacus (strain ATCC 29366 / DSM 635 / J-10-fl)</name>
    <dbReference type="NCBI Taxonomy" id="324602"/>
    <lineage>
        <taxon>Bacteria</taxon>
        <taxon>Bacillati</taxon>
        <taxon>Chloroflexota</taxon>
        <taxon>Chloroflexia</taxon>
        <taxon>Chloroflexales</taxon>
        <taxon>Chloroflexineae</taxon>
        <taxon>Chloroflexaceae</taxon>
        <taxon>Chloroflexus</taxon>
    </lineage>
</organism>
<reference key="1">
    <citation type="journal article" date="2011" name="BMC Genomics">
        <title>Complete genome sequence of the filamentous anoxygenic phototrophic bacterium Chloroflexus aurantiacus.</title>
        <authorList>
            <person name="Tang K.H."/>
            <person name="Barry K."/>
            <person name="Chertkov O."/>
            <person name="Dalin E."/>
            <person name="Han C.S."/>
            <person name="Hauser L.J."/>
            <person name="Honchak B.M."/>
            <person name="Karbach L.E."/>
            <person name="Land M.L."/>
            <person name="Lapidus A."/>
            <person name="Larimer F.W."/>
            <person name="Mikhailova N."/>
            <person name="Pitluck S."/>
            <person name="Pierson B.K."/>
            <person name="Blankenship R.E."/>
        </authorList>
    </citation>
    <scope>NUCLEOTIDE SEQUENCE [LARGE SCALE GENOMIC DNA]</scope>
    <source>
        <strain>ATCC 29366 / DSM 635 / J-10-fl</strain>
    </source>
</reference>
<name>SMTB_CHLAA</name>
<dbReference type="EC" id="2.8.3.22"/>
<dbReference type="EMBL" id="CP000909">
    <property type="protein sequence ID" value="ABY33432.1"/>
    <property type="molecule type" value="Genomic_DNA"/>
</dbReference>
<dbReference type="RefSeq" id="WP_012256088.1">
    <property type="nucleotide sequence ID" value="NC_010175.1"/>
</dbReference>
<dbReference type="RefSeq" id="YP_001633821.1">
    <property type="nucleotide sequence ID" value="NC_010175.1"/>
</dbReference>
<dbReference type="SMR" id="A9WC39"/>
<dbReference type="STRING" id="324602.Caur_0178"/>
<dbReference type="EnsemblBacteria" id="ABY33432">
    <property type="protein sequence ID" value="ABY33432"/>
    <property type="gene ID" value="Caur_0178"/>
</dbReference>
<dbReference type="KEGG" id="cau:Caur_0178"/>
<dbReference type="PATRIC" id="fig|324602.8.peg.206"/>
<dbReference type="eggNOG" id="COG1804">
    <property type="taxonomic scope" value="Bacteria"/>
</dbReference>
<dbReference type="HOGENOM" id="CLU_033975_2_0_0"/>
<dbReference type="InParanoid" id="A9WC39"/>
<dbReference type="BioCyc" id="MetaCyc:MONOMER-13600"/>
<dbReference type="Proteomes" id="UP000002008">
    <property type="component" value="Chromosome"/>
</dbReference>
<dbReference type="GO" id="GO:0008410">
    <property type="term" value="F:CoA-transferase activity"/>
    <property type="evidence" value="ECO:0000250"/>
    <property type="project" value="UniProtKB"/>
</dbReference>
<dbReference type="GO" id="GO:0047370">
    <property type="term" value="F:succinate-citramalate CoA-transferase activity"/>
    <property type="evidence" value="ECO:0007669"/>
    <property type="project" value="RHEA"/>
</dbReference>
<dbReference type="GO" id="GO:0043427">
    <property type="term" value="P:carbon fixation by 3-hydroxypropionate cycle"/>
    <property type="evidence" value="ECO:0000250"/>
    <property type="project" value="UniProtKB"/>
</dbReference>
<dbReference type="FunFam" id="3.30.1540.10:FF:000006">
    <property type="entry name" value="Succinyl-CoA--L-malate CoA-transferase beta subunit"/>
    <property type="match status" value="1"/>
</dbReference>
<dbReference type="Gene3D" id="3.40.50.10540">
    <property type="entry name" value="Crotonobetainyl-coa:carnitine coa-transferase, domain 1"/>
    <property type="match status" value="1"/>
</dbReference>
<dbReference type="Gene3D" id="3.30.1540.10">
    <property type="entry name" value="formyl-coa transferase, domain 3"/>
    <property type="match status" value="1"/>
</dbReference>
<dbReference type="InterPro" id="IPR050509">
    <property type="entry name" value="CoA-transferase_III"/>
</dbReference>
<dbReference type="InterPro" id="IPR003673">
    <property type="entry name" value="CoA-Trfase_fam_III"/>
</dbReference>
<dbReference type="InterPro" id="IPR044855">
    <property type="entry name" value="CoA-Trfase_III_dom3_sf"/>
</dbReference>
<dbReference type="InterPro" id="IPR023606">
    <property type="entry name" value="CoA-Trfase_III_dom_1_sf"/>
</dbReference>
<dbReference type="PANTHER" id="PTHR48228:SF6">
    <property type="entry name" value="L-CARNITINE COA-TRANSFERASE"/>
    <property type="match status" value="1"/>
</dbReference>
<dbReference type="PANTHER" id="PTHR48228">
    <property type="entry name" value="SUCCINYL-COA--D-CITRAMALATE COA-TRANSFERASE"/>
    <property type="match status" value="1"/>
</dbReference>
<dbReference type="Pfam" id="PF02515">
    <property type="entry name" value="CoA_transf_3"/>
    <property type="match status" value="1"/>
</dbReference>
<dbReference type="SUPFAM" id="SSF89796">
    <property type="entry name" value="CoA-transferase family III (CaiB/BaiF)"/>
    <property type="match status" value="1"/>
</dbReference>
<accession>A9WC39</accession>
<sequence>MDGTTTTLPLAGIRVIDAATVIAAPFCATLLGEFGADVLKVEHPIGGDALRRFGTPTARGDTLTWLSESRNKRSVTLNLQHPEGARVFKELIAHSDVLCENFRPGTLEKWGLGWDVLSKINPRLIMLRVTGYGQTGPYRDRPGFARIAHAVGGIAYLAGMPKGTPVTPGSTTLADYMTGLYGCIGVLLALRHREQTGRGQYIDAALYESVFRCSDELVPAYGMYRKVRERHGSHYNEFACPHGHFQTKDGKWVAISCATDKLFARLANAMGRPELASSSVYGDQKVRLAHASDVNEIVRDWCSSLTRAEVLERCYATATPAAPLNDIADFFGDRHVHARRNLVAIDAEDLGETLIMPNVVPKLSETPGSIRSLGPKLGEHTEEVLKEILGMCDEQINDLRSKRVI</sequence>
<protein>
    <recommendedName>
        <fullName>Succinyl-CoA--L-malate CoA-transferase beta subunit</fullName>
        <ecNumber>2.8.3.22</ecNumber>
    </recommendedName>
</protein>
<gene>
    <name type="primary">smtB</name>
    <name type="ordered locus">Caur_0178</name>
</gene>